<name>PPNP_PHOPR</name>
<accession>Q6LLX8</accession>
<keyword id="KW-0328">Glycosyltransferase</keyword>
<keyword id="KW-1185">Reference proteome</keyword>
<keyword id="KW-0808">Transferase</keyword>
<evidence type="ECO:0000255" key="1">
    <source>
        <dbReference type="HAMAP-Rule" id="MF_01537"/>
    </source>
</evidence>
<evidence type="ECO:0000305" key="2"/>
<reference key="1">
    <citation type="journal article" date="2005" name="Science">
        <title>Life at depth: Photobacterium profundum genome sequence and expression analysis.</title>
        <authorList>
            <person name="Vezzi A."/>
            <person name="Campanaro S."/>
            <person name="D'Angelo M."/>
            <person name="Simonato F."/>
            <person name="Vitulo N."/>
            <person name="Lauro F.M."/>
            <person name="Cestaro A."/>
            <person name="Malacrida G."/>
            <person name="Simionati B."/>
            <person name="Cannata N."/>
            <person name="Romualdi C."/>
            <person name="Bartlett D.H."/>
            <person name="Valle G."/>
        </authorList>
    </citation>
    <scope>NUCLEOTIDE SEQUENCE [LARGE SCALE GENOMIC DNA]</scope>
    <source>
        <strain>ATCC BAA-1253 / SS9</strain>
    </source>
</reference>
<organism>
    <name type="scientific">Photobacterium profundum (strain SS9)</name>
    <dbReference type="NCBI Taxonomy" id="298386"/>
    <lineage>
        <taxon>Bacteria</taxon>
        <taxon>Pseudomonadati</taxon>
        <taxon>Pseudomonadota</taxon>
        <taxon>Gammaproteobacteria</taxon>
        <taxon>Vibrionales</taxon>
        <taxon>Vibrionaceae</taxon>
        <taxon>Photobacterium</taxon>
    </lineage>
</organism>
<sequence length="93" mass="10171">MLNVNEYFEGQVKSIGFEAQGDRTSVGVMAAGEYTFGTAAPERMTVVKGSMDVKRPGHVEWETFNAGDDFEVPGDSSFEVKITSSTAYLCDYL</sequence>
<protein>
    <recommendedName>
        <fullName evidence="1">Pyrimidine/purine nucleoside phosphorylase</fullName>
        <ecNumber evidence="1">2.4.2.1</ecNumber>
        <ecNumber evidence="1">2.4.2.2</ecNumber>
    </recommendedName>
    <alternativeName>
        <fullName evidence="1">Adenosine phosphorylase</fullName>
    </alternativeName>
    <alternativeName>
        <fullName evidence="1">Cytidine phosphorylase</fullName>
    </alternativeName>
    <alternativeName>
        <fullName evidence="1">Guanosine phosphorylase</fullName>
    </alternativeName>
    <alternativeName>
        <fullName evidence="1">Inosine phosphorylase</fullName>
    </alternativeName>
    <alternativeName>
        <fullName evidence="1">Thymidine phosphorylase</fullName>
    </alternativeName>
    <alternativeName>
        <fullName evidence="1">Uridine phosphorylase</fullName>
    </alternativeName>
    <alternativeName>
        <fullName evidence="1">Xanthosine phosphorylase</fullName>
    </alternativeName>
</protein>
<dbReference type="EC" id="2.4.2.1" evidence="1"/>
<dbReference type="EC" id="2.4.2.2" evidence="1"/>
<dbReference type="EMBL" id="CR378674">
    <property type="protein sequence ID" value="CAG21700.1"/>
    <property type="status" value="ALT_INIT"/>
    <property type="molecule type" value="Genomic_DNA"/>
</dbReference>
<dbReference type="RefSeq" id="WP_041394556.1">
    <property type="nucleotide sequence ID" value="NC_006370.1"/>
</dbReference>
<dbReference type="SMR" id="Q6LLX8"/>
<dbReference type="STRING" id="298386.PBPRA3416"/>
<dbReference type="KEGG" id="ppr:PBPRA3416"/>
<dbReference type="eggNOG" id="COG3123">
    <property type="taxonomic scope" value="Bacteria"/>
</dbReference>
<dbReference type="HOGENOM" id="CLU_157874_0_0_6"/>
<dbReference type="Proteomes" id="UP000000593">
    <property type="component" value="Chromosome 1"/>
</dbReference>
<dbReference type="GO" id="GO:0005829">
    <property type="term" value="C:cytosol"/>
    <property type="evidence" value="ECO:0007669"/>
    <property type="project" value="TreeGrafter"/>
</dbReference>
<dbReference type="GO" id="GO:0047975">
    <property type="term" value="F:guanosine phosphorylase activity"/>
    <property type="evidence" value="ECO:0007669"/>
    <property type="project" value="UniProtKB-EC"/>
</dbReference>
<dbReference type="GO" id="GO:0004731">
    <property type="term" value="F:purine-nucleoside phosphorylase activity"/>
    <property type="evidence" value="ECO:0007669"/>
    <property type="project" value="UniProtKB-UniRule"/>
</dbReference>
<dbReference type="GO" id="GO:0009032">
    <property type="term" value="F:thymidine phosphorylase activity"/>
    <property type="evidence" value="ECO:0007669"/>
    <property type="project" value="UniProtKB-EC"/>
</dbReference>
<dbReference type="GO" id="GO:0004850">
    <property type="term" value="F:uridine phosphorylase activity"/>
    <property type="evidence" value="ECO:0007669"/>
    <property type="project" value="UniProtKB-EC"/>
</dbReference>
<dbReference type="CDD" id="cd20296">
    <property type="entry name" value="cupin_PpnP-like"/>
    <property type="match status" value="1"/>
</dbReference>
<dbReference type="FunFam" id="2.60.120.10:FF:000016">
    <property type="entry name" value="Pyrimidine/purine nucleoside phosphorylase"/>
    <property type="match status" value="1"/>
</dbReference>
<dbReference type="Gene3D" id="2.60.120.10">
    <property type="entry name" value="Jelly Rolls"/>
    <property type="match status" value="1"/>
</dbReference>
<dbReference type="HAMAP" id="MF_01537">
    <property type="entry name" value="Nucleos_phosphorylase_PpnP"/>
    <property type="match status" value="1"/>
</dbReference>
<dbReference type="InterPro" id="IPR009664">
    <property type="entry name" value="Ppnp"/>
</dbReference>
<dbReference type="InterPro" id="IPR014710">
    <property type="entry name" value="RmlC-like_jellyroll"/>
</dbReference>
<dbReference type="InterPro" id="IPR011051">
    <property type="entry name" value="RmlC_Cupin_sf"/>
</dbReference>
<dbReference type="PANTHER" id="PTHR36540">
    <property type="entry name" value="PYRIMIDINE/PURINE NUCLEOSIDE PHOSPHORYLASE"/>
    <property type="match status" value="1"/>
</dbReference>
<dbReference type="PANTHER" id="PTHR36540:SF1">
    <property type="entry name" value="PYRIMIDINE_PURINE NUCLEOSIDE PHOSPHORYLASE"/>
    <property type="match status" value="1"/>
</dbReference>
<dbReference type="Pfam" id="PF06865">
    <property type="entry name" value="Ppnp"/>
    <property type="match status" value="1"/>
</dbReference>
<dbReference type="SUPFAM" id="SSF51182">
    <property type="entry name" value="RmlC-like cupins"/>
    <property type="match status" value="1"/>
</dbReference>
<comment type="function">
    <text evidence="1">Catalyzes the phosphorolysis of diverse nucleosides, yielding D-ribose 1-phosphate and the respective free bases. Can use uridine, adenosine, guanosine, cytidine, thymidine, inosine and xanthosine as substrates. Also catalyzes the reverse reactions.</text>
</comment>
<comment type="catalytic activity">
    <reaction evidence="1">
        <text>a purine D-ribonucleoside + phosphate = a purine nucleobase + alpha-D-ribose 1-phosphate</text>
        <dbReference type="Rhea" id="RHEA:19805"/>
        <dbReference type="ChEBI" id="CHEBI:26386"/>
        <dbReference type="ChEBI" id="CHEBI:43474"/>
        <dbReference type="ChEBI" id="CHEBI:57720"/>
        <dbReference type="ChEBI" id="CHEBI:142355"/>
        <dbReference type="EC" id="2.4.2.1"/>
    </reaction>
</comment>
<comment type="catalytic activity">
    <reaction evidence="1">
        <text>adenosine + phosphate = alpha-D-ribose 1-phosphate + adenine</text>
        <dbReference type="Rhea" id="RHEA:27642"/>
        <dbReference type="ChEBI" id="CHEBI:16335"/>
        <dbReference type="ChEBI" id="CHEBI:16708"/>
        <dbReference type="ChEBI" id="CHEBI:43474"/>
        <dbReference type="ChEBI" id="CHEBI:57720"/>
        <dbReference type="EC" id="2.4.2.1"/>
    </reaction>
</comment>
<comment type="catalytic activity">
    <reaction evidence="1">
        <text>cytidine + phosphate = cytosine + alpha-D-ribose 1-phosphate</text>
        <dbReference type="Rhea" id="RHEA:52540"/>
        <dbReference type="ChEBI" id="CHEBI:16040"/>
        <dbReference type="ChEBI" id="CHEBI:17562"/>
        <dbReference type="ChEBI" id="CHEBI:43474"/>
        <dbReference type="ChEBI" id="CHEBI:57720"/>
        <dbReference type="EC" id="2.4.2.2"/>
    </reaction>
</comment>
<comment type="catalytic activity">
    <reaction evidence="1">
        <text>guanosine + phosphate = alpha-D-ribose 1-phosphate + guanine</text>
        <dbReference type="Rhea" id="RHEA:13233"/>
        <dbReference type="ChEBI" id="CHEBI:16235"/>
        <dbReference type="ChEBI" id="CHEBI:16750"/>
        <dbReference type="ChEBI" id="CHEBI:43474"/>
        <dbReference type="ChEBI" id="CHEBI:57720"/>
        <dbReference type="EC" id="2.4.2.1"/>
    </reaction>
</comment>
<comment type="catalytic activity">
    <reaction evidence="1">
        <text>inosine + phosphate = alpha-D-ribose 1-phosphate + hypoxanthine</text>
        <dbReference type="Rhea" id="RHEA:27646"/>
        <dbReference type="ChEBI" id="CHEBI:17368"/>
        <dbReference type="ChEBI" id="CHEBI:17596"/>
        <dbReference type="ChEBI" id="CHEBI:43474"/>
        <dbReference type="ChEBI" id="CHEBI:57720"/>
        <dbReference type="EC" id="2.4.2.1"/>
    </reaction>
</comment>
<comment type="catalytic activity">
    <reaction evidence="1">
        <text>thymidine + phosphate = 2-deoxy-alpha-D-ribose 1-phosphate + thymine</text>
        <dbReference type="Rhea" id="RHEA:16037"/>
        <dbReference type="ChEBI" id="CHEBI:17748"/>
        <dbReference type="ChEBI" id="CHEBI:17821"/>
        <dbReference type="ChEBI" id="CHEBI:43474"/>
        <dbReference type="ChEBI" id="CHEBI:57259"/>
        <dbReference type="EC" id="2.4.2.2"/>
    </reaction>
</comment>
<comment type="catalytic activity">
    <reaction evidence="1">
        <text>uridine + phosphate = alpha-D-ribose 1-phosphate + uracil</text>
        <dbReference type="Rhea" id="RHEA:24388"/>
        <dbReference type="ChEBI" id="CHEBI:16704"/>
        <dbReference type="ChEBI" id="CHEBI:17568"/>
        <dbReference type="ChEBI" id="CHEBI:43474"/>
        <dbReference type="ChEBI" id="CHEBI:57720"/>
        <dbReference type="EC" id="2.4.2.2"/>
    </reaction>
</comment>
<comment type="catalytic activity">
    <reaction evidence="1">
        <text>xanthosine + phosphate = alpha-D-ribose 1-phosphate + xanthine</text>
        <dbReference type="Rhea" id="RHEA:27638"/>
        <dbReference type="ChEBI" id="CHEBI:17712"/>
        <dbReference type="ChEBI" id="CHEBI:18107"/>
        <dbReference type="ChEBI" id="CHEBI:43474"/>
        <dbReference type="ChEBI" id="CHEBI:57720"/>
        <dbReference type="EC" id="2.4.2.1"/>
    </reaction>
</comment>
<comment type="similarity">
    <text evidence="1">Belongs to the nucleoside phosphorylase PpnP family.</text>
</comment>
<comment type="sequence caution" evidence="2">
    <conflict type="erroneous initiation">
        <sequence resource="EMBL-CDS" id="CAG21700"/>
    </conflict>
</comment>
<gene>
    <name evidence="1" type="primary">ppnP</name>
    <name type="ordered locus">PBPRA3416</name>
</gene>
<feature type="chain" id="PRO_0000211772" description="Pyrimidine/purine nucleoside phosphorylase">
    <location>
        <begin position="1"/>
        <end position="93"/>
    </location>
</feature>
<proteinExistence type="inferred from homology"/>